<evidence type="ECO:0000250" key="1"/>
<evidence type="ECO:0000255" key="2">
    <source>
        <dbReference type="HAMAP-Rule" id="MF_00223"/>
    </source>
</evidence>
<organism>
    <name type="scientific">Rickettsia felis (strain ATCC VR-1525 / URRWXCal2)</name>
    <name type="common">Rickettsia azadi</name>
    <dbReference type="NCBI Taxonomy" id="315456"/>
    <lineage>
        <taxon>Bacteria</taxon>
        <taxon>Pseudomonadati</taxon>
        <taxon>Pseudomonadota</taxon>
        <taxon>Alphaproteobacteria</taxon>
        <taxon>Rickettsiales</taxon>
        <taxon>Rickettsiaceae</taxon>
        <taxon>Rickettsieae</taxon>
        <taxon>Rickettsia</taxon>
        <taxon>spotted fever group</taxon>
    </lineage>
</organism>
<name>GCH1_RICFE</name>
<protein>
    <recommendedName>
        <fullName evidence="2">GTP cyclohydrolase 1</fullName>
        <ecNumber evidence="2">3.5.4.16</ecNumber>
    </recommendedName>
    <alternativeName>
        <fullName evidence="2">GTP cyclohydrolase I</fullName>
        <shortName evidence="2">GTP-CH-I</shortName>
    </alternativeName>
</protein>
<feature type="chain" id="PRO_0000278030" description="GTP cyclohydrolase 1">
    <location>
        <begin position="1"/>
        <end position="190"/>
    </location>
</feature>
<feature type="binding site" evidence="2">
    <location>
        <position position="80"/>
    </location>
    <ligand>
        <name>Zn(2+)</name>
        <dbReference type="ChEBI" id="CHEBI:29105"/>
    </ligand>
</feature>
<feature type="binding site" evidence="2">
    <location>
        <position position="83"/>
    </location>
    <ligand>
        <name>Zn(2+)</name>
        <dbReference type="ChEBI" id="CHEBI:29105"/>
    </ligand>
</feature>
<feature type="binding site" evidence="2">
    <location>
        <position position="151"/>
    </location>
    <ligand>
        <name>Zn(2+)</name>
        <dbReference type="ChEBI" id="CHEBI:29105"/>
    </ligand>
</feature>
<comment type="catalytic activity">
    <reaction evidence="2">
        <text>GTP + H2O = 7,8-dihydroneopterin 3'-triphosphate + formate + H(+)</text>
        <dbReference type="Rhea" id="RHEA:17473"/>
        <dbReference type="ChEBI" id="CHEBI:15377"/>
        <dbReference type="ChEBI" id="CHEBI:15378"/>
        <dbReference type="ChEBI" id="CHEBI:15740"/>
        <dbReference type="ChEBI" id="CHEBI:37565"/>
        <dbReference type="ChEBI" id="CHEBI:58462"/>
        <dbReference type="EC" id="3.5.4.16"/>
    </reaction>
</comment>
<comment type="pathway">
    <text evidence="2">Cofactor biosynthesis; 7,8-dihydroneopterin triphosphate biosynthesis; 7,8-dihydroneopterin triphosphate from GTP: step 1/1.</text>
</comment>
<comment type="subunit">
    <text evidence="1">Toroid-shaped homodecamer, composed of two pentamers of five dimers.</text>
</comment>
<comment type="similarity">
    <text evidence="2">Belongs to the GTP cyclohydrolase I family.</text>
</comment>
<gene>
    <name evidence="2" type="primary">folE</name>
    <name type="ordered locus">RF_0599</name>
</gene>
<accession>Q4ULX3</accession>
<dbReference type="EC" id="3.5.4.16" evidence="2"/>
<dbReference type="EMBL" id="CP000053">
    <property type="protein sequence ID" value="AAY61450.1"/>
    <property type="molecule type" value="Genomic_DNA"/>
</dbReference>
<dbReference type="SMR" id="Q4ULX3"/>
<dbReference type="STRING" id="315456.RF_0599"/>
<dbReference type="KEGG" id="rfe:RF_0599"/>
<dbReference type="eggNOG" id="COG0302">
    <property type="taxonomic scope" value="Bacteria"/>
</dbReference>
<dbReference type="HOGENOM" id="CLU_049768_3_1_5"/>
<dbReference type="OrthoDB" id="9801207at2"/>
<dbReference type="UniPathway" id="UPA00848">
    <property type="reaction ID" value="UER00151"/>
</dbReference>
<dbReference type="Proteomes" id="UP000008548">
    <property type="component" value="Chromosome"/>
</dbReference>
<dbReference type="GO" id="GO:0005737">
    <property type="term" value="C:cytoplasm"/>
    <property type="evidence" value="ECO:0007669"/>
    <property type="project" value="TreeGrafter"/>
</dbReference>
<dbReference type="GO" id="GO:0005525">
    <property type="term" value="F:GTP binding"/>
    <property type="evidence" value="ECO:0007669"/>
    <property type="project" value="UniProtKB-KW"/>
</dbReference>
<dbReference type="GO" id="GO:0003934">
    <property type="term" value="F:GTP cyclohydrolase I activity"/>
    <property type="evidence" value="ECO:0007669"/>
    <property type="project" value="UniProtKB-UniRule"/>
</dbReference>
<dbReference type="GO" id="GO:0008270">
    <property type="term" value="F:zinc ion binding"/>
    <property type="evidence" value="ECO:0007669"/>
    <property type="project" value="UniProtKB-UniRule"/>
</dbReference>
<dbReference type="GO" id="GO:0006730">
    <property type="term" value="P:one-carbon metabolic process"/>
    <property type="evidence" value="ECO:0007669"/>
    <property type="project" value="UniProtKB-UniRule"/>
</dbReference>
<dbReference type="GO" id="GO:0006729">
    <property type="term" value="P:tetrahydrobiopterin biosynthetic process"/>
    <property type="evidence" value="ECO:0007669"/>
    <property type="project" value="TreeGrafter"/>
</dbReference>
<dbReference type="GO" id="GO:0046654">
    <property type="term" value="P:tetrahydrofolate biosynthetic process"/>
    <property type="evidence" value="ECO:0007669"/>
    <property type="project" value="UniProtKB-UniRule"/>
</dbReference>
<dbReference type="FunFam" id="1.10.286.10:FF:000001">
    <property type="entry name" value="GTP cyclohydrolase 1"/>
    <property type="match status" value="1"/>
</dbReference>
<dbReference type="FunFam" id="3.30.1130.10:FF:000001">
    <property type="entry name" value="GTP cyclohydrolase 1"/>
    <property type="match status" value="1"/>
</dbReference>
<dbReference type="Gene3D" id="1.10.286.10">
    <property type="match status" value="1"/>
</dbReference>
<dbReference type="Gene3D" id="3.30.1130.10">
    <property type="match status" value="1"/>
</dbReference>
<dbReference type="HAMAP" id="MF_00223">
    <property type="entry name" value="FolE"/>
    <property type="match status" value="1"/>
</dbReference>
<dbReference type="InterPro" id="IPR043133">
    <property type="entry name" value="GTP-CH-I_C/QueF"/>
</dbReference>
<dbReference type="InterPro" id="IPR043134">
    <property type="entry name" value="GTP-CH-I_N"/>
</dbReference>
<dbReference type="InterPro" id="IPR001474">
    <property type="entry name" value="GTP_CycHdrlase_I"/>
</dbReference>
<dbReference type="InterPro" id="IPR018234">
    <property type="entry name" value="GTP_CycHdrlase_I_CS"/>
</dbReference>
<dbReference type="InterPro" id="IPR020602">
    <property type="entry name" value="GTP_CycHdrlase_I_dom"/>
</dbReference>
<dbReference type="NCBIfam" id="TIGR00063">
    <property type="entry name" value="folE"/>
    <property type="match status" value="1"/>
</dbReference>
<dbReference type="NCBIfam" id="NF006825">
    <property type="entry name" value="PRK09347.1-2"/>
    <property type="match status" value="1"/>
</dbReference>
<dbReference type="NCBIfam" id="NF006826">
    <property type="entry name" value="PRK09347.1-3"/>
    <property type="match status" value="1"/>
</dbReference>
<dbReference type="PANTHER" id="PTHR11109:SF7">
    <property type="entry name" value="GTP CYCLOHYDROLASE 1"/>
    <property type="match status" value="1"/>
</dbReference>
<dbReference type="PANTHER" id="PTHR11109">
    <property type="entry name" value="GTP CYCLOHYDROLASE I"/>
    <property type="match status" value="1"/>
</dbReference>
<dbReference type="Pfam" id="PF01227">
    <property type="entry name" value="GTP_cyclohydroI"/>
    <property type="match status" value="1"/>
</dbReference>
<dbReference type="SUPFAM" id="SSF55620">
    <property type="entry name" value="Tetrahydrobiopterin biosynthesis enzymes-like"/>
    <property type="match status" value="1"/>
</dbReference>
<dbReference type="PROSITE" id="PS00859">
    <property type="entry name" value="GTP_CYCLOHYDROL_1_1"/>
    <property type="match status" value="1"/>
</dbReference>
<dbReference type="PROSITE" id="PS00860">
    <property type="entry name" value="GTP_CYCLOHYDROL_1_2"/>
    <property type="match status" value="1"/>
</dbReference>
<reference key="1">
    <citation type="journal article" date="2005" name="PLoS Biol.">
        <title>The genome sequence of Rickettsia felis identifies the first putative conjugative plasmid in an obligate intracellular parasite.</title>
        <authorList>
            <person name="Ogata H."/>
            <person name="Renesto P."/>
            <person name="Audic S."/>
            <person name="Robert C."/>
            <person name="Blanc G."/>
            <person name="Fournier P.-E."/>
            <person name="Parinello H."/>
            <person name="Claverie J.-M."/>
            <person name="Raoult D."/>
        </authorList>
    </citation>
    <scope>NUCLEOTIDE SEQUENCE [LARGE SCALE GENOMIC DNA]</scope>
    <source>
        <strain>ATCC VR-1525 / URRWXCal2</strain>
    </source>
</reference>
<proteinExistence type="inferred from homology"/>
<sequence length="190" mass="21704">MSKPTREEAKEAVRTLLKFIGEDPTREGLLKTPDRVVNSYTEIFSGYGKDVAEILNTKFYDTCNFQDFILLKDIKFTSFCEHHMLPFIGTVDIAYIPDNCIVGISKLARIVNAFSKRLQIQEKMTVQIAESVQENLKPLGVAVKISALHSCMSMRGVMQDNSVMNTMHYTGIFAEQQKYRYDFLNLTAKR</sequence>
<keyword id="KW-0342">GTP-binding</keyword>
<keyword id="KW-0378">Hydrolase</keyword>
<keyword id="KW-0479">Metal-binding</keyword>
<keyword id="KW-0547">Nucleotide-binding</keyword>
<keyword id="KW-0554">One-carbon metabolism</keyword>
<keyword id="KW-0862">Zinc</keyword>